<gene>
    <name evidence="1" type="primary">rny</name>
    <name type="ordered locus">DVU_2671</name>
</gene>
<evidence type="ECO:0000255" key="1">
    <source>
        <dbReference type="HAMAP-Rule" id="MF_00335"/>
    </source>
</evidence>
<evidence type="ECO:0000255" key="2">
    <source>
        <dbReference type="PROSITE-ProRule" id="PRU01175"/>
    </source>
</evidence>
<proteinExistence type="inferred from homology"/>
<feature type="chain" id="PRO_0000344868" description="Ribonuclease Y">
    <location>
        <begin position="1"/>
        <end position="519"/>
    </location>
</feature>
<feature type="transmembrane region" description="Helical" evidence="1">
    <location>
        <begin position="3"/>
        <end position="23"/>
    </location>
</feature>
<feature type="domain" description="KH" evidence="1">
    <location>
        <begin position="209"/>
        <end position="272"/>
    </location>
</feature>
<feature type="domain" description="HD" evidence="2">
    <location>
        <begin position="335"/>
        <end position="428"/>
    </location>
</feature>
<dbReference type="EC" id="3.1.-.-" evidence="1"/>
<dbReference type="EMBL" id="AE017285">
    <property type="protein sequence ID" value="AAS97143.1"/>
    <property type="molecule type" value="Genomic_DNA"/>
</dbReference>
<dbReference type="RefSeq" id="WP_010939940.1">
    <property type="nucleotide sequence ID" value="NC_002937.3"/>
</dbReference>
<dbReference type="RefSeq" id="YP_011883.1">
    <property type="nucleotide sequence ID" value="NC_002937.3"/>
</dbReference>
<dbReference type="SMR" id="Q728D2"/>
<dbReference type="STRING" id="882.DVU_2671"/>
<dbReference type="PaxDb" id="882-DVU_2671"/>
<dbReference type="EnsemblBacteria" id="AAS97143">
    <property type="protein sequence ID" value="AAS97143"/>
    <property type="gene ID" value="DVU_2671"/>
</dbReference>
<dbReference type="KEGG" id="dvu:DVU_2671"/>
<dbReference type="PATRIC" id="fig|882.5.peg.2415"/>
<dbReference type="eggNOG" id="COG1418">
    <property type="taxonomic scope" value="Bacteria"/>
</dbReference>
<dbReference type="HOGENOM" id="CLU_028328_1_0_7"/>
<dbReference type="OrthoDB" id="9803205at2"/>
<dbReference type="PhylomeDB" id="Q728D2"/>
<dbReference type="Proteomes" id="UP000002194">
    <property type="component" value="Chromosome"/>
</dbReference>
<dbReference type="GO" id="GO:0005886">
    <property type="term" value="C:plasma membrane"/>
    <property type="evidence" value="ECO:0007669"/>
    <property type="project" value="UniProtKB-SubCell"/>
</dbReference>
<dbReference type="GO" id="GO:0003723">
    <property type="term" value="F:RNA binding"/>
    <property type="evidence" value="ECO:0007669"/>
    <property type="project" value="UniProtKB-UniRule"/>
</dbReference>
<dbReference type="GO" id="GO:0004521">
    <property type="term" value="F:RNA endonuclease activity"/>
    <property type="evidence" value="ECO:0007669"/>
    <property type="project" value="UniProtKB-UniRule"/>
</dbReference>
<dbReference type="GO" id="GO:0006402">
    <property type="term" value="P:mRNA catabolic process"/>
    <property type="evidence" value="ECO:0007669"/>
    <property type="project" value="UniProtKB-UniRule"/>
</dbReference>
<dbReference type="CDD" id="cd00077">
    <property type="entry name" value="HDc"/>
    <property type="match status" value="1"/>
</dbReference>
<dbReference type="CDD" id="cd22431">
    <property type="entry name" value="KH-I_RNaseY"/>
    <property type="match status" value="1"/>
</dbReference>
<dbReference type="FunFam" id="1.10.3210.10:FF:000022">
    <property type="entry name" value="Ribonuclease Y"/>
    <property type="match status" value="1"/>
</dbReference>
<dbReference type="Gene3D" id="3.30.310.210">
    <property type="match status" value="1"/>
</dbReference>
<dbReference type="Gene3D" id="1.10.3210.10">
    <property type="entry name" value="Hypothetical protein af1432"/>
    <property type="match status" value="1"/>
</dbReference>
<dbReference type="HAMAP" id="MF_00335">
    <property type="entry name" value="RNase_Y"/>
    <property type="match status" value="1"/>
</dbReference>
<dbReference type="InterPro" id="IPR028987">
    <property type="entry name" value="ATP_synth_B-like_membr_sf"/>
</dbReference>
<dbReference type="InterPro" id="IPR003607">
    <property type="entry name" value="HD/PDEase_dom"/>
</dbReference>
<dbReference type="InterPro" id="IPR006674">
    <property type="entry name" value="HD_domain"/>
</dbReference>
<dbReference type="InterPro" id="IPR006675">
    <property type="entry name" value="HDIG_dom"/>
</dbReference>
<dbReference type="InterPro" id="IPR004087">
    <property type="entry name" value="KH_dom"/>
</dbReference>
<dbReference type="InterPro" id="IPR004088">
    <property type="entry name" value="KH_dom_type_1"/>
</dbReference>
<dbReference type="InterPro" id="IPR036612">
    <property type="entry name" value="KH_dom_type_1_sf"/>
</dbReference>
<dbReference type="InterPro" id="IPR017705">
    <property type="entry name" value="Ribonuclease_Y"/>
</dbReference>
<dbReference type="InterPro" id="IPR022711">
    <property type="entry name" value="RNase_Y_N"/>
</dbReference>
<dbReference type="NCBIfam" id="TIGR00277">
    <property type="entry name" value="HDIG"/>
    <property type="match status" value="1"/>
</dbReference>
<dbReference type="NCBIfam" id="TIGR03319">
    <property type="entry name" value="RNase_Y"/>
    <property type="match status" value="1"/>
</dbReference>
<dbReference type="PANTHER" id="PTHR12826">
    <property type="entry name" value="RIBONUCLEASE Y"/>
    <property type="match status" value="1"/>
</dbReference>
<dbReference type="PANTHER" id="PTHR12826:SF15">
    <property type="entry name" value="RIBONUCLEASE Y"/>
    <property type="match status" value="1"/>
</dbReference>
<dbReference type="Pfam" id="PF01966">
    <property type="entry name" value="HD"/>
    <property type="match status" value="1"/>
</dbReference>
<dbReference type="Pfam" id="PF00013">
    <property type="entry name" value="KH_1"/>
    <property type="match status" value="1"/>
</dbReference>
<dbReference type="Pfam" id="PF12072">
    <property type="entry name" value="RNase_Y_N"/>
    <property type="match status" value="1"/>
</dbReference>
<dbReference type="SMART" id="SM00471">
    <property type="entry name" value="HDc"/>
    <property type="match status" value="1"/>
</dbReference>
<dbReference type="SMART" id="SM00322">
    <property type="entry name" value="KH"/>
    <property type="match status" value="1"/>
</dbReference>
<dbReference type="SUPFAM" id="SSF54791">
    <property type="entry name" value="Eukaryotic type KH-domain (KH-domain type I)"/>
    <property type="match status" value="1"/>
</dbReference>
<dbReference type="SUPFAM" id="SSF81573">
    <property type="entry name" value="F1F0 ATP synthase subunit B, membrane domain"/>
    <property type="match status" value="1"/>
</dbReference>
<dbReference type="SUPFAM" id="SSF109604">
    <property type="entry name" value="HD-domain/PDEase-like"/>
    <property type="match status" value="1"/>
</dbReference>
<dbReference type="PROSITE" id="PS51831">
    <property type="entry name" value="HD"/>
    <property type="match status" value="1"/>
</dbReference>
<dbReference type="PROSITE" id="PS50084">
    <property type="entry name" value="KH_TYPE_1"/>
    <property type="match status" value="1"/>
</dbReference>
<keyword id="KW-1003">Cell membrane</keyword>
<keyword id="KW-0255">Endonuclease</keyword>
<keyword id="KW-0378">Hydrolase</keyword>
<keyword id="KW-0472">Membrane</keyword>
<keyword id="KW-0540">Nuclease</keyword>
<keyword id="KW-1185">Reference proteome</keyword>
<keyword id="KW-0694">RNA-binding</keyword>
<keyword id="KW-0812">Transmembrane</keyword>
<keyword id="KW-1133">Transmembrane helix</keyword>
<comment type="function">
    <text evidence="1">Endoribonuclease that initiates mRNA decay.</text>
</comment>
<comment type="subcellular location">
    <subcellularLocation>
        <location evidence="1">Cell membrane</location>
        <topology evidence="1">Single-pass membrane protein</topology>
    </subcellularLocation>
</comment>
<comment type="similarity">
    <text evidence="1">Belongs to the RNase Y family.</text>
</comment>
<accession>Q728D2</accession>
<protein>
    <recommendedName>
        <fullName evidence="1">Ribonuclease Y</fullName>
        <shortName evidence="1">RNase Y</shortName>
        <ecNumber evidence="1">3.1.-.-</ecNumber>
    </recommendedName>
</protein>
<organism>
    <name type="scientific">Nitratidesulfovibrio vulgaris (strain ATCC 29579 / DSM 644 / CCUG 34227 / NCIMB 8303 / VKM B-1760 / Hildenborough)</name>
    <name type="common">Desulfovibrio vulgaris</name>
    <dbReference type="NCBI Taxonomy" id="882"/>
    <lineage>
        <taxon>Bacteria</taxon>
        <taxon>Pseudomonadati</taxon>
        <taxon>Thermodesulfobacteriota</taxon>
        <taxon>Desulfovibrionia</taxon>
        <taxon>Desulfovibrionales</taxon>
        <taxon>Desulfovibrionaceae</taxon>
        <taxon>Nitratidesulfovibrio</taxon>
    </lineage>
</organism>
<reference key="1">
    <citation type="journal article" date="2004" name="Nat. Biotechnol.">
        <title>The genome sequence of the anaerobic, sulfate-reducing bacterium Desulfovibrio vulgaris Hildenborough.</title>
        <authorList>
            <person name="Heidelberg J.F."/>
            <person name="Seshadri R."/>
            <person name="Haveman S.A."/>
            <person name="Hemme C.L."/>
            <person name="Paulsen I.T."/>
            <person name="Kolonay J.F."/>
            <person name="Eisen J.A."/>
            <person name="Ward N.L."/>
            <person name="Methe B.A."/>
            <person name="Brinkac L.M."/>
            <person name="Daugherty S.C."/>
            <person name="DeBoy R.T."/>
            <person name="Dodson R.J."/>
            <person name="Durkin A.S."/>
            <person name="Madupu R."/>
            <person name="Nelson W.C."/>
            <person name="Sullivan S.A."/>
            <person name="Fouts D.E."/>
            <person name="Haft D.H."/>
            <person name="Selengut J."/>
            <person name="Peterson J.D."/>
            <person name="Davidsen T.M."/>
            <person name="Zafar N."/>
            <person name="Zhou L."/>
            <person name="Radune D."/>
            <person name="Dimitrov G."/>
            <person name="Hance M."/>
            <person name="Tran K."/>
            <person name="Khouri H.M."/>
            <person name="Gill J."/>
            <person name="Utterback T.R."/>
            <person name="Feldblyum T.V."/>
            <person name="Wall J.D."/>
            <person name="Voordouw G."/>
            <person name="Fraser C.M."/>
        </authorList>
    </citation>
    <scope>NUCLEOTIDE SEQUENCE [LARGE SCALE GENOMIC DNA]</scope>
    <source>
        <strain>ATCC 29579 / DSM 644 / CCUG 34227 / NCIMB 8303 / VKM B-1760 / Hildenborough</strain>
    </source>
</reference>
<name>RNY_NITV2</name>
<sequence>MGLMIFAYIAIGAVLGAGTGYLLHRYVSAKRIGDANELAKRIVEEARKEAQAQKKEILLQGQDEIFNQKRELENEFKERERELKARDRKLEEQGERLEEKLEKATQKEHEVLAIEKELTRKERRLATLEEELEGKIAEQDHRLEEVSGLTAEEARARIMEEVEARTRHESAKMIRVIEMEARETADRKAKEILASAIQRYAGDYVGEQTVTAVTLPSEDMKGRIIGREGRNIRALEAATGVDLIIDDTPETVILSAYSPLRRQVAKMALERLIQDGRIHPARIEDIVRKCEQELEVQVREVGEQATFDAGVHGIHPDIIKLLGQLRYRTSFSQNVLQHSLEVSALCGMMAAELGMDIKKAKRAGLLHDIGKAVDHEVEGPHALIGADIAKKYGEGKDIIHAIAAHHEDQPPKTALAVLVQAADSISGARPGARKELLENYVKRLEDLENIATGFEGVSKVYAIQAGREIRVMVNSENVDDDQTYMLCKDIAAKIEKNLTYPGQIRVTVIRERRAVGYAK</sequence>